<organism>
    <name type="scientific">Homo sapiens</name>
    <name type="common">Human</name>
    <dbReference type="NCBI Taxonomy" id="9606"/>
    <lineage>
        <taxon>Eukaryota</taxon>
        <taxon>Metazoa</taxon>
        <taxon>Chordata</taxon>
        <taxon>Craniata</taxon>
        <taxon>Vertebrata</taxon>
        <taxon>Euteleostomi</taxon>
        <taxon>Mammalia</taxon>
        <taxon>Eutheria</taxon>
        <taxon>Euarchontoglires</taxon>
        <taxon>Primates</taxon>
        <taxon>Haplorrhini</taxon>
        <taxon>Catarrhini</taxon>
        <taxon>Hominidae</taxon>
        <taxon>Homo</taxon>
    </lineage>
</organism>
<reference key="1">
    <citation type="submission" date="2004-08" db="EMBL/GenBank/DDBJ databases">
        <title>Homo sapiens cDNA.</title>
        <authorList>
            <person name="Sugiyama A."/>
            <person name="Inoue H."/>
            <person name="Oka M."/>
        </authorList>
    </citation>
    <scope>NUCLEOTIDE SEQUENCE [MRNA] (ISOFORM 1)</scope>
    <source>
        <tissue>Heart</tissue>
    </source>
</reference>
<reference key="2">
    <citation type="journal article" date="2004" name="Nat. Genet.">
        <title>Complete sequencing and characterization of 21,243 full-length human cDNAs.</title>
        <authorList>
            <person name="Ota T."/>
            <person name="Suzuki Y."/>
            <person name="Nishikawa T."/>
            <person name="Otsuki T."/>
            <person name="Sugiyama T."/>
            <person name="Irie R."/>
            <person name="Wakamatsu A."/>
            <person name="Hayashi K."/>
            <person name="Sato H."/>
            <person name="Nagai K."/>
            <person name="Kimura K."/>
            <person name="Makita H."/>
            <person name="Sekine M."/>
            <person name="Obayashi M."/>
            <person name="Nishi T."/>
            <person name="Shibahara T."/>
            <person name="Tanaka T."/>
            <person name="Ishii S."/>
            <person name="Yamamoto J."/>
            <person name="Saito K."/>
            <person name="Kawai Y."/>
            <person name="Isono Y."/>
            <person name="Nakamura Y."/>
            <person name="Nagahari K."/>
            <person name="Murakami K."/>
            <person name="Yasuda T."/>
            <person name="Iwayanagi T."/>
            <person name="Wagatsuma M."/>
            <person name="Shiratori A."/>
            <person name="Sudo H."/>
            <person name="Hosoiri T."/>
            <person name="Kaku Y."/>
            <person name="Kodaira H."/>
            <person name="Kondo H."/>
            <person name="Sugawara M."/>
            <person name="Takahashi M."/>
            <person name="Kanda K."/>
            <person name="Yokoi T."/>
            <person name="Furuya T."/>
            <person name="Kikkawa E."/>
            <person name="Omura Y."/>
            <person name="Abe K."/>
            <person name="Kamihara K."/>
            <person name="Katsuta N."/>
            <person name="Sato K."/>
            <person name="Tanikawa M."/>
            <person name="Yamazaki M."/>
            <person name="Ninomiya K."/>
            <person name="Ishibashi T."/>
            <person name="Yamashita H."/>
            <person name="Murakawa K."/>
            <person name="Fujimori K."/>
            <person name="Tanai H."/>
            <person name="Kimata M."/>
            <person name="Watanabe M."/>
            <person name="Hiraoka S."/>
            <person name="Chiba Y."/>
            <person name="Ishida S."/>
            <person name="Ono Y."/>
            <person name="Takiguchi S."/>
            <person name="Watanabe S."/>
            <person name="Yosida M."/>
            <person name="Hotuta T."/>
            <person name="Kusano J."/>
            <person name="Kanehori K."/>
            <person name="Takahashi-Fujii A."/>
            <person name="Hara H."/>
            <person name="Tanase T.-O."/>
            <person name="Nomura Y."/>
            <person name="Togiya S."/>
            <person name="Komai F."/>
            <person name="Hara R."/>
            <person name="Takeuchi K."/>
            <person name="Arita M."/>
            <person name="Imose N."/>
            <person name="Musashino K."/>
            <person name="Yuuki H."/>
            <person name="Oshima A."/>
            <person name="Sasaki N."/>
            <person name="Aotsuka S."/>
            <person name="Yoshikawa Y."/>
            <person name="Matsunawa H."/>
            <person name="Ichihara T."/>
            <person name="Shiohata N."/>
            <person name="Sano S."/>
            <person name="Moriya S."/>
            <person name="Momiyama H."/>
            <person name="Satoh N."/>
            <person name="Takami S."/>
            <person name="Terashima Y."/>
            <person name="Suzuki O."/>
            <person name="Nakagawa S."/>
            <person name="Senoh A."/>
            <person name="Mizoguchi H."/>
            <person name="Goto Y."/>
            <person name="Shimizu F."/>
            <person name="Wakebe H."/>
            <person name="Hishigaki H."/>
            <person name="Watanabe T."/>
            <person name="Sugiyama A."/>
            <person name="Takemoto M."/>
            <person name="Kawakami B."/>
            <person name="Yamazaki M."/>
            <person name="Watanabe K."/>
            <person name="Kumagai A."/>
            <person name="Itakura S."/>
            <person name="Fukuzumi Y."/>
            <person name="Fujimori Y."/>
            <person name="Komiyama M."/>
            <person name="Tashiro H."/>
            <person name="Tanigami A."/>
            <person name="Fujiwara T."/>
            <person name="Ono T."/>
            <person name="Yamada K."/>
            <person name="Fujii Y."/>
            <person name="Ozaki K."/>
            <person name="Hirao M."/>
            <person name="Ohmori Y."/>
            <person name="Kawabata A."/>
            <person name="Hikiji T."/>
            <person name="Kobatake N."/>
            <person name="Inagaki H."/>
            <person name="Ikema Y."/>
            <person name="Okamoto S."/>
            <person name="Okitani R."/>
            <person name="Kawakami T."/>
            <person name="Noguchi S."/>
            <person name="Itoh T."/>
            <person name="Shigeta K."/>
            <person name="Senba T."/>
            <person name="Matsumura K."/>
            <person name="Nakajima Y."/>
            <person name="Mizuno T."/>
            <person name="Morinaga M."/>
            <person name="Sasaki M."/>
            <person name="Togashi T."/>
            <person name="Oyama M."/>
            <person name="Hata H."/>
            <person name="Watanabe M."/>
            <person name="Komatsu T."/>
            <person name="Mizushima-Sugano J."/>
            <person name="Satoh T."/>
            <person name="Shirai Y."/>
            <person name="Takahashi Y."/>
            <person name="Nakagawa K."/>
            <person name="Okumura K."/>
            <person name="Nagase T."/>
            <person name="Nomura N."/>
            <person name="Kikuchi H."/>
            <person name="Masuho Y."/>
            <person name="Yamashita R."/>
            <person name="Nakai K."/>
            <person name="Yada T."/>
            <person name="Nakamura Y."/>
            <person name="Ohara O."/>
            <person name="Isogai T."/>
            <person name="Sugano S."/>
        </authorList>
    </citation>
    <scope>NUCLEOTIDE SEQUENCE [LARGE SCALE MRNA] (ISOFORM 2)</scope>
</reference>
<reference key="3">
    <citation type="journal article" date="2004" name="Nature">
        <title>The DNA sequence and comparative analysis of human chromosome 10.</title>
        <authorList>
            <person name="Deloukas P."/>
            <person name="Earthrowl M.E."/>
            <person name="Grafham D.V."/>
            <person name="Rubenfield M."/>
            <person name="French L."/>
            <person name="Steward C.A."/>
            <person name="Sims S.K."/>
            <person name="Jones M.C."/>
            <person name="Searle S."/>
            <person name="Scott C."/>
            <person name="Howe K."/>
            <person name="Hunt S.E."/>
            <person name="Andrews T.D."/>
            <person name="Gilbert J.G.R."/>
            <person name="Swarbreck D."/>
            <person name="Ashurst J.L."/>
            <person name="Taylor A."/>
            <person name="Battles J."/>
            <person name="Bird C.P."/>
            <person name="Ainscough R."/>
            <person name="Almeida J.P."/>
            <person name="Ashwell R.I.S."/>
            <person name="Ambrose K.D."/>
            <person name="Babbage A.K."/>
            <person name="Bagguley C.L."/>
            <person name="Bailey J."/>
            <person name="Banerjee R."/>
            <person name="Bates K."/>
            <person name="Beasley H."/>
            <person name="Bray-Allen S."/>
            <person name="Brown A.J."/>
            <person name="Brown J.Y."/>
            <person name="Burford D.C."/>
            <person name="Burrill W."/>
            <person name="Burton J."/>
            <person name="Cahill P."/>
            <person name="Camire D."/>
            <person name="Carter N.P."/>
            <person name="Chapman J.C."/>
            <person name="Clark S.Y."/>
            <person name="Clarke G."/>
            <person name="Clee C.M."/>
            <person name="Clegg S."/>
            <person name="Corby N."/>
            <person name="Coulson A."/>
            <person name="Dhami P."/>
            <person name="Dutta I."/>
            <person name="Dunn M."/>
            <person name="Faulkner L."/>
            <person name="Frankish A."/>
            <person name="Frankland J.A."/>
            <person name="Garner P."/>
            <person name="Garnett J."/>
            <person name="Gribble S."/>
            <person name="Griffiths C."/>
            <person name="Grocock R."/>
            <person name="Gustafson E."/>
            <person name="Hammond S."/>
            <person name="Harley J.L."/>
            <person name="Hart E."/>
            <person name="Heath P.D."/>
            <person name="Ho T.P."/>
            <person name="Hopkins B."/>
            <person name="Horne J."/>
            <person name="Howden P.J."/>
            <person name="Huckle E."/>
            <person name="Hynds C."/>
            <person name="Johnson C."/>
            <person name="Johnson D."/>
            <person name="Kana A."/>
            <person name="Kay M."/>
            <person name="Kimberley A.M."/>
            <person name="Kershaw J.K."/>
            <person name="Kokkinaki M."/>
            <person name="Laird G.K."/>
            <person name="Lawlor S."/>
            <person name="Lee H.M."/>
            <person name="Leongamornlert D.A."/>
            <person name="Laird G."/>
            <person name="Lloyd C."/>
            <person name="Lloyd D.M."/>
            <person name="Loveland J."/>
            <person name="Lovell J."/>
            <person name="McLaren S."/>
            <person name="McLay K.E."/>
            <person name="McMurray A."/>
            <person name="Mashreghi-Mohammadi M."/>
            <person name="Matthews L."/>
            <person name="Milne S."/>
            <person name="Nickerson T."/>
            <person name="Nguyen M."/>
            <person name="Overton-Larty E."/>
            <person name="Palmer S.A."/>
            <person name="Pearce A.V."/>
            <person name="Peck A.I."/>
            <person name="Pelan S."/>
            <person name="Phillimore B."/>
            <person name="Porter K."/>
            <person name="Rice C.M."/>
            <person name="Rogosin A."/>
            <person name="Ross M.T."/>
            <person name="Sarafidou T."/>
            <person name="Sehra H.K."/>
            <person name="Shownkeen R."/>
            <person name="Skuce C.D."/>
            <person name="Smith M."/>
            <person name="Standring L."/>
            <person name="Sycamore N."/>
            <person name="Tester J."/>
            <person name="Thorpe A."/>
            <person name="Torcasso W."/>
            <person name="Tracey A."/>
            <person name="Tromans A."/>
            <person name="Tsolas J."/>
            <person name="Wall M."/>
            <person name="Walsh J."/>
            <person name="Wang H."/>
            <person name="Weinstock K."/>
            <person name="West A.P."/>
            <person name="Willey D.L."/>
            <person name="Whitehead S.L."/>
            <person name="Wilming L."/>
            <person name="Wray P.W."/>
            <person name="Young L."/>
            <person name="Chen Y."/>
            <person name="Lovering R.C."/>
            <person name="Moschonas N.K."/>
            <person name="Siebert R."/>
            <person name="Fechtel K."/>
            <person name="Bentley D."/>
            <person name="Durbin R.M."/>
            <person name="Hubbard T."/>
            <person name="Doucette-Stamm L."/>
            <person name="Beck S."/>
            <person name="Smith D.R."/>
            <person name="Rogers J."/>
        </authorList>
    </citation>
    <scope>NUCLEOTIDE SEQUENCE [LARGE SCALE GENOMIC DNA]</scope>
</reference>
<reference key="4">
    <citation type="submission" date="2005-07" db="EMBL/GenBank/DDBJ databases">
        <authorList>
            <person name="Mural R.J."/>
            <person name="Istrail S."/>
            <person name="Sutton G.G."/>
            <person name="Florea L."/>
            <person name="Halpern A.L."/>
            <person name="Mobarry C.M."/>
            <person name="Lippert R."/>
            <person name="Walenz B."/>
            <person name="Shatkay H."/>
            <person name="Dew I."/>
            <person name="Miller J.R."/>
            <person name="Flanigan M.J."/>
            <person name="Edwards N.J."/>
            <person name="Bolanos R."/>
            <person name="Fasulo D."/>
            <person name="Halldorsson B.V."/>
            <person name="Hannenhalli S."/>
            <person name="Turner R."/>
            <person name="Yooseph S."/>
            <person name="Lu F."/>
            <person name="Nusskern D.R."/>
            <person name="Shue B.C."/>
            <person name="Zheng X.H."/>
            <person name="Zhong F."/>
            <person name="Delcher A.L."/>
            <person name="Huson D.H."/>
            <person name="Kravitz S.A."/>
            <person name="Mouchard L."/>
            <person name="Reinert K."/>
            <person name="Remington K.A."/>
            <person name="Clark A.G."/>
            <person name="Waterman M.S."/>
            <person name="Eichler E.E."/>
            <person name="Adams M.D."/>
            <person name="Hunkapiller M.W."/>
            <person name="Myers E.W."/>
            <person name="Venter J.C."/>
        </authorList>
    </citation>
    <scope>NUCLEOTIDE SEQUENCE [LARGE SCALE GENOMIC DNA]</scope>
</reference>
<reference key="5">
    <citation type="journal article" date="2004" name="Genome Res.">
        <title>The status, quality, and expansion of the NIH full-length cDNA project: the Mammalian Gene Collection (MGC).</title>
        <authorList>
            <consortium name="The MGC Project Team"/>
        </authorList>
    </citation>
    <scope>NUCLEOTIDE SEQUENCE [LARGE SCALE MRNA] (ISOFORM 2)</scope>
</reference>
<feature type="chain" id="PRO_0000187675" description="Synaptopodin 2-like protein">
    <location>
        <begin position="1"/>
        <end position="977"/>
    </location>
</feature>
<feature type="domain" description="PDZ" evidence="3">
    <location>
        <begin position="6"/>
        <end position="88"/>
    </location>
</feature>
<feature type="region of interest" description="Disordered" evidence="4">
    <location>
        <begin position="91"/>
        <end position="226"/>
    </location>
</feature>
<feature type="region of interest" description="Disordered" evidence="4">
    <location>
        <begin position="317"/>
        <end position="352"/>
    </location>
</feature>
<feature type="region of interest" description="Disordered" evidence="4">
    <location>
        <begin position="364"/>
        <end position="677"/>
    </location>
</feature>
<feature type="region of interest" description="Disordered" evidence="4">
    <location>
        <begin position="697"/>
        <end position="802"/>
    </location>
</feature>
<feature type="region of interest" description="Disordered" evidence="4">
    <location>
        <begin position="922"/>
        <end position="950"/>
    </location>
</feature>
<feature type="compositionally biased region" description="Pro residues" evidence="4">
    <location>
        <begin position="109"/>
        <end position="123"/>
    </location>
</feature>
<feature type="compositionally biased region" description="Pro residues" evidence="4">
    <location>
        <begin position="183"/>
        <end position="192"/>
    </location>
</feature>
<feature type="compositionally biased region" description="Polar residues" evidence="4">
    <location>
        <begin position="194"/>
        <end position="203"/>
    </location>
</feature>
<feature type="compositionally biased region" description="Low complexity" evidence="4">
    <location>
        <begin position="216"/>
        <end position="226"/>
    </location>
</feature>
<feature type="compositionally biased region" description="Pro residues" evidence="4">
    <location>
        <begin position="436"/>
        <end position="450"/>
    </location>
</feature>
<feature type="compositionally biased region" description="Polar residues" evidence="4">
    <location>
        <begin position="510"/>
        <end position="525"/>
    </location>
</feature>
<feature type="compositionally biased region" description="Low complexity" evidence="4">
    <location>
        <begin position="530"/>
        <end position="545"/>
    </location>
</feature>
<feature type="compositionally biased region" description="Low complexity" evidence="4">
    <location>
        <begin position="572"/>
        <end position="595"/>
    </location>
</feature>
<feature type="compositionally biased region" description="Pro residues" evidence="4">
    <location>
        <begin position="596"/>
        <end position="607"/>
    </location>
</feature>
<feature type="compositionally biased region" description="Pro residues" evidence="4">
    <location>
        <begin position="704"/>
        <end position="730"/>
    </location>
</feature>
<feature type="compositionally biased region" description="Pro residues" evidence="4">
    <location>
        <begin position="781"/>
        <end position="796"/>
    </location>
</feature>
<feature type="compositionally biased region" description="Pro residues" evidence="4">
    <location>
        <begin position="929"/>
        <end position="938"/>
    </location>
</feature>
<feature type="modified residue" description="Phosphoserine" evidence="2">
    <location>
        <position position="108"/>
    </location>
</feature>
<feature type="modified residue" description="Phosphoserine" evidence="2">
    <location>
        <position position="111"/>
    </location>
</feature>
<feature type="modified residue" description="Phosphothreonine" evidence="2">
    <location>
        <position position="141"/>
    </location>
</feature>
<feature type="modified residue" description="Phosphoserine" evidence="2">
    <location>
        <position position="143"/>
    </location>
</feature>
<feature type="modified residue" description="Phosphoserine" evidence="2">
    <location>
        <position position="178"/>
    </location>
</feature>
<feature type="modified residue" description="Phosphoserine" evidence="2">
    <location>
        <position position="180"/>
    </location>
</feature>
<feature type="modified residue" description="Phosphoserine" evidence="2">
    <location>
        <position position="345"/>
    </location>
</feature>
<feature type="modified residue" description="Phosphoserine" evidence="2">
    <location>
        <position position="350"/>
    </location>
</feature>
<feature type="modified residue" description="Phosphoserine" evidence="2">
    <location>
        <position position="374"/>
    </location>
</feature>
<feature type="modified residue" description="Phosphoserine" evidence="2">
    <location>
        <position position="381"/>
    </location>
</feature>
<feature type="modified residue" description="Phosphoserine" evidence="2">
    <location>
        <position position="384"/>
    </location>
</feature>
<feature type="modified residue" description="Omega-N-methylarginine" evidence="2">
    <location>
        <position position="386"/>
    </location>
</feature>
<feature type="modified residue" description="Omega-N-methylarginine" evidence="2">
    <location>
        <position position="466"/>
    </location>
</feature>
<feature type="modified residue" description="Omega-N-methylarginine" evidence="2">
    <location>
        <position position="469"/>
    </location>
</feature>
<feature type="modified residue" description="Omega-N-methylarginine" evidence="2">
    <location>
        <position position="479"/>
    </location>
</feature>
<feature type="modified residue" description="Phosphoserine" evidence="2">
    <location>
        <position position="670"/>
    </location>
</feature>
<feature type="modified residue" description="Phosphoserine" evidence="2">
    <location>
        <position position="678"/>
    </location>
</feature>
<feature type="modified residue" description="Phosphothreonine" evidence="2">
    <location>
        <position position="705"/>
    </location>
</feature>
<feature type="modified residue" description="Phosphothreonine" evidence="2">
    <location>
        <position position="713"/>
    </location>
</feature>
<feature type="modified residue" description="Omega-N-methylarginine" evidence="2">
    <location>
        <position position="757"/>
    </location>
</feature>
<feature type="modified residue" description="Phosphoserine" evidence="2">
    <location>
        <position position="788"/>
    </location>
</feature>
<feature type="modified residue" description="Phosphoserine" evidence="2">
    <location>
        <position position="790"/>
    </location>
</feature>
<feature type="modified residue" description="Phosphothreonine" evidence="2">
    <location>
        <position position="792"/>
    </location>
</feature>
<feature type="modified residue" description="Omega-N-methylarginine" evidence="2">
    <location>
        <position position="806"/>
    </location>
</feature>
<feature type="modified residue" description="Omega-N-methylarginine" evidence="2">
    <location>
        <position position="826"/>
    </location>
</feature>
<feature type="modified residue" description="Omega-N-methylarginine" evidence="2">
    <location>
        <position position="889"/>
    </location>
</feature>
<feature type="modified residue" description="Phosphoserine" evidence="2">
    <location>
        <position position="891"/>
    </location>
</feature>
<feature type="modified residue" description="Phosphothreonine" evidence="2">
    <location>
        <position position="892"/>
    </location>
</feature>
<feature type="modified residue" description="Phosphothreonine" evidence="2">
    <location>
        <position position="898"/>
    </location>
</feature>
<feature type="modified residue" description="Omega-N-methylarginine" evidence="2">
    <location>
        <position position="910"/>
    </location>
</feature>
<feature type="modified residue" description="Asymmetric dimethylarginine; alternate" evidence="2">
    <location>
        <position position="921"/>
    </location>
</feature>
<feature type="modified residue" description="Omega-N-methylarginine; alternate" evidence="2">
    <location>
        <position position="921"/>
    </location>
</feature>
<feature type="modified residue" description="Omega-N-methylarginine" evidence="2">
    <location>
        <position position="955"/>
    </location>
</feature>
<feature type="modified residue" description="Omega-N-methylarginine" evidence="2">
    <location>
        <position position="957"/>
    </location>
</feature>
<feature type="splice variant" id="VSP_011495" description="In isoform 2." evidence="5 6">
    <location>
        <begin position="1"/>
        <end position="224"/>
    </location>
</feature>
<feature type="splice variant" id="VSP_011496" description="In isoform 2." evidence="5 6">
    <original>LRPGPHLIPMVGPVPHPVAEDLTTTYTQKAKQAK</original>
    <variation>METFEPISQEPLSQASYDKAPDPVPELQDSFYAE</variation>
    <location>
        <begin position="225"/>
        <end position="258"/>
    </location>
</feature>
<feature type="sequence variant" id="VAR_061835" description="In dbSNP:rs57006992.">
    <original>P</original>
    <variation>H</variation>
    <location>
        <position position="508"/>
    </location>
</feature>
<feature type="sequence variant" id="VAR_019671" description="In dbSNP:rs3812629.">
    <original>P</original>
    <variation>L</variation>
    <location>
        <position position="707"/>
    </location>
</feature>
<feature type="sequence variant" id="VAR_047065" description="In dbSNP:rs34163229.">
    <original>S</original>
    <variation>Y</variation>
    <location>
        <position position="833"/>
    </location>
</feature>
<feature type="sequence conflict" description="In Ref. 2; BAB14346." evidence="7" ref="2">
    <original>I</original>
    <variation>T</variation>
    <location>
        <position position="748"/>
    </location>
</feature>
<gene>
    <name type="primary">SYNPO2L</name>
</gene>
<comment type="function">
    <text evidence="1">Actin-associated protein that may play a role in modulating actin-based shape.</text>
</comment>
<comment type="interaction">
    <interactant intactId="EBI-12082116">
        <id>Q9H987-2</id>
    </interactant>
    <interactant intactId="EBI-351710">
        <id>P12814</id>
        <label>ACTN1</label>
    </interactant>
    <organismsDiffer>false</organismsDiffer>
    <experiments>3</experiments>
</comment>
<comment type="interaction">
    <interactant intactId="EBI-12082116">
        <id>Q9H987-2</id>
    </interactant>
    <interactant intactId="EBI-77797">
        <id>P35609</id>
        <label>ACTN2</label>
    </interactant>
    <organismsDiffer>false</organismsDiffer>
    <experiments>3</experiments>
</comment>
<comment type="interaction">
    <interactant intactId="EBI-12082116">
        <id>Q9H987-2</id>
    </interactant>
    <interactant intactId="EBI-2880652">
        <id>Q08043</id>
        <label>ACTN3</label>
    </interactant>
    <organismsDiffer>false</organismsDiffer>
    <experiments>3</experiments>
</comment>
<comment type="interaction">
    <interactant intactId="EBI-12082116">
        <id>Q9H987-2</id>
    </interactant>
    <interactant intactId="EBI-618309">
        <id>Q08379</id>
        <label>GOLGA2</label>
    </interactant>
    <organismsDiffer>false</organismsDiffer>
    <experiments>3</experiments>
</comment>
<comment type="interaction">
    <interactant intactId="EBI-12082116">
        <id>Q9H987-2</id>
    </interactant>
    <interactant intactId="EBI-603350">
        <id>P28070</id>
        <label>PSMB4</label>
    </interactant>
    <organismsDiffer>false</organismsDiffer>
    <experiments>3</experiments>
</comment>
<comment type="interaction">
    <interactant intactId="EBI-12082116">
        <id>Q9H987-2</id>
    </interactant>
    <interactant intactId="EBI-741237">
        <id>O60504</id>
        <label>SORBS3</label>
    </interactant>
    <organismsDiffer>false</organismsDiffer>
    <experiments>3</experiments>
</comment>
<comment type="subcellular location">
    <subcellularLocation>
        <location evidence="1">Cytoplasm</location>
        <location evidence="1">Cytoskeleton</location>
    </subcellularLocation>
</comment>
<comment type="alternative products">
    <event type="alternative splicing"/>
    <isoform>
        <id>Q9H987-1</id>
        <name>1</name>
        <sequence type="displayed"/>
    </isoform>
    <isoform>
        <id>Q9H987-2</id>
        <name>2</name>
        <sequence type="described" ref="VSP_011495 VSP_011496"/>
    </isoform>
</comment>
<comment type="similarity">
    <text evidence="7">Belongs to the synaptopodin family.</text>
</comment>
<sequence>MGAEEEVLVTLSGGAPWGFRLHGGAEQRKPLQVSKIRRRSQAGRAGLRERDQLLAINGVSCTNLSHASAMSLIDASGNQLVLTVQRLADEGPVQSPSPHELQVLSPLSPLSPEPPGAPVPQPLQPGSLRSPPDSEAYYGETDSDADGPATQEKPRRPRRRGPTRPTPPGAPPDEVYLSDSPAEPAPTIPGPPSQGDSRVSSPSWEDGAALQPPPAEALLLPHGPLRPGPHLIPMVGPVPHPVAEDLTTTYTQKAKQAKLQRAESLQEKSIKEAKTKCRTIASLLTAAPNPHSKGVLMFKKRRQRAKKYTLVSFGAAAGTGAEEEDGVPPTSESELDEEAFSDARSLTNQSDWDSPYLDMELARAGSRASEGQGSGLGGQLSEVSGRGVQLFEQQRQRADSSTQELARVEPAAMLNGEGLQSPPRAQSAPPEAAVLPPSPLPAPVASPRPFQPGGGAPTPAPSIFNRSARPFTPGLQGQRPTTTSVIFRPLAPKRANDSLGGLSPAPPPFLSSQGPTPLPSFTSGVPSHAPVSGSPSTPRSSGPVTATSSLYIPAPSRPVTPGGAPEPPAPPSAAAMTSTASIFLSAPLRPSARPEAPAPGPGAPEPPSAREQRISVPAARTGILQEARRRGTRKQMFRPGKEETKNSPNPELLSLVQNLDEKPRAGGAESGPEEDALSLGAEACNFMQPVGARSYKTLPHVTPKTPPPMAPKTPPPMTPKTPPPVAPKPPSRGLLDGLVNGAASSAGIPEPPRLQGRGGELFAKRQSRADRYVVEGTPGPGLGPRPRSPSPTPSLPPSWKYSPNIRAPPPIAYNPLLSPFFPQAARTLPKAQSQGPRATPKQGIKALDFMRHQPYQLKTAMFCFDEVPPTPGPIASGSPKTARVQEIRRFSTPAPQPTAEPLAPTVLAPRAATTLDEPIWRTELASAPVPSPAPPPEAPRGLGASPSSCGFQVARPRFSATRTGLQAHVWRPGAGHQ</sequence>
<name>SYP2L_HUMAN</name>
<evidence type="ECO:0000250" key="1"/>
<evidence type="ECO:0000250" key="2">
    <source>
        <dbReference type="UniProtKB" id="Q8BWB1"/>
    </source>
</evidence>
<evidence type="ECO:0000255" key="3">
    <source>
        <dbReference type="PROSITE-ProRule" id="PRU00143"/>
    </source>
</evidence>
<evidence type="ECO:0000256" key="4">
    <source>
        <dbReference type="SAM" id="MobiDB-lite"/>
    </source>
</evidence>
<evidence type="ECO:0000303" key="5">
    <source>
    </source>
</evidence>
<evidence type="ECO:0000303" key="6">
    <source>
    </source>
</evidence>
<evidence type="ECO:0000305" key="7"/>
<keyword id="KW-0009">Actin-binding</keyword>
<keyword id="KW-0025">Alternative splicing</keyword>
<keyword id="KW-0963">Cytoplasm</keyword>
<keyword id="KW-0206">Cytoskeleton</keyword>
<keyword id="KW-0488">Methylation</keyword>
<keyword id="KW-0597">Phosphoprotein</keyword>
<keyword id="KW-1267">Proteomics identification</keyword>
<keyword id="KW-1185">Reference proteome</keyword>
<protein>
    <recommendedName>
        <fullName>Synaptopodin 2-like protein</fullName>
    </recommendedName>
</protein>
<dbReference type="EMBL" id="AB188489">
    <property type="protein sequence ID" value="BAD37139.1"/>
    <property type="molecule type" value="mRNA"/>
</dbReference>
<dbReference type="EMBL" id="AK022983">
    <property type="protein sequence ID" value="BAB14346.1"/>
    <property type="molecule type" value="mRNA"/>
</dbReference>
<dbReference type="EMBL" id="AC073389">
    <property type="status" value="NOT_ANNOTATED_CDS"/>
    <property type="molecule type" value="Genomic_DNA"/>
</dbReference>
<dbReference type="EMBL" id="CH471083">
    <property type="protein sequence ID" value="EAW54507.1"/>
    <property type="molecule type" value="Genomic_DNA"/>
</dbReference>
<dbReference type="EMBL" id="BC142635">
    <property type="protein sequence ID" value="AAI42636.1"/>
    <property type="molecule type" value="mRNA"/>
</dbReference>
<dbReference type="CCDS" id="CCDS44438.1">
    <molecule id="Q9H987-1"/>
</dbReference>
<dbReference type="CCDS" id="CCDS7331.1">
    <molecule id="Q9H987-2"/>
</dbReference>
<dbReference type="RefSeq" id="NP_001107605.1">
    <molecule id="Q9H987-1"/>
    <property type="nucleotide sequence ID" value="NM_001114133.3"/>
</dbReference>
<dbReference type="RefSeq" id="NP_079151.2">
    <molecule id="Q9H987-2"/>
    <property type="nucleotide sequence ID" value="NM_024875.5"/>
</dbReference>
<dbReference type="SMR" id="Q9H987"/>
<dbReference type="BioGRID" id="123008">
    <property type="interactions" value="29"/>
</dbReference>
<dbReference type="FunCoup" id="Q9H987">
    <property type="interactions" value="314"/>
</dbReference>
<dbReference type="IntAct" id="Q9H987">
    <property type="interactions" value="10"/>
</dbReference>
<dbReference type="MINT" id="Q9H987"/>
<dbReference type="STRING" id="9606.ENSP00000378289"/>
<dbReference type="GlyGen" id="Q9H987">
    <property type="glycosylation" value="9 sites, 1 N-linked glycan (1 site), 1 O-linked glycan (1 site)"/>
</dbReference>
<dbReference type="iPTMnet" id="Q9H987"/>
<dbReference type="PhosphoSitePlus" id="Q9H987"/>
<dbReference type="SwissPalm" id="Q9H987"/>
<dbReference type="BioMuta" id="SYNPO2L"/>
<dbReference type="DMDM" id="212276492"/>
<dbReference type="jPOST" id="Q9H987"/>
<dbReference type="MassIVE" id="Q9H987"/>
<dbReference type="PaxDb" id="9606-ENSP00000378289"/>
<dbReference type="PeptideAtlas" id="Q9H987"/>
<dbReference type="ProteomicsDB" id="81295">
    <molecule id="Q9H987-1"/>
</dbReference>
<dbReference type="ProteomicsDB" id="81296">
    <molecule id="Q9H987-2"/>
</dbReference>
<dbReference type="Antibodypedia" id="45402">
    <property type="antibodies" value="72 antibodies from 22 providers"/>
</dbReference>
<dbReference type="DNASU" id="79933"/>
<dbReference type="Ensembl" id="ENST00000372873.8">
    <molecule id="Q9H987-2"/>
    <property type="protein sequence ID" value="ENSP00000361964.4"/>
    <property type="gene ID" value="ENSG00000166317.12"/>
</dbReference>
<dbReference type="Ensembl" id="ENST00000394810.3">
    <molecule id="Q9H987-1"/>
    <property type="protein sequence ID" value="ENSP00000378289.2"/>
    <property type="gene ID" value="ENSG00000166317.12"/>
</dbReference>
<dbReference type="GeneID" id="79933"/>
<dbReference type="KEGG" id="hsa:79933"/>
<dbReference type="MANE-Select" id="ENST00000394810.3">
    <property type="protein sequence ID" value="ENSP00000378289.2"/>
    <property type="RefSeq nucleotide sequence ID" value="NM_001114133.3"/>
    <property type="RefSeq protein sequence ID" value="NP_001107605.1"/>
</dbReference>
<dbReference type="UCSC" id="uc001jus.6">
    <molecule id="Q9H987-1"/>
    <property type="organism name" value="human"/>
</dbReference>
<dbReference type="AGR" id="HGNC:23532"/>
<dbReference type="CTD" id="79933"/>
<dbReference type="DisGeNET" id="79933"/>
<dbReference type="GeneCards" id="SYNPO2L"/>
<dbReference type="HGNC" id="HGNC:23532">
    <property type="gene designation" value="SYNPO2L"/>
</dbReference>
<dbReference type="HPA" id="ENSG00000166317">
    <property type="expression patterns" value="Group enriched (heart muscle, skeletal muscle, tongue)"/>
</dbReference>
<dbReference type="neXtProt" id="NX_Q9H987"/>
<dbReference type="OpenTargets" id="ENSG00000166317"/>
<dbReference type="PharmGKB" id="PA134889033"/>
<dbReference type="VEuPathDB" id="HostDB:ENSG00000166317"/>
<dbReference type="eggNOG" id="KOG1703">
    <property type="taxonomic scope" value="Eukaryota"/>
</dbReference>
<dbReference type="GeneTree" id="ENSGT00950000183054"/>
<dbReference type="HOGENOM" id="CLU_007120_1_0_1"/>
<dbReference type="InParanoid" id="Q9H987"/>
<dbReference type="OMA" id="MVQNMDG"/>
<dbReference type="OrthoDB" id="8882674at2759"/>
<dbReference type="PAN-GO" id="Q9H987">
    <property type="GO annotations" value="5 GO annotations based on evolutionary models"/>
</dbReference>
<dbReference type="PhylomeDB" id="Q9H987"/>
<dbReference type="TreeFam" id="TF330867"/>
<dbReference type="PathwayCommons" id="Q9H987"/>
<dbReference type="SignaLink" id="Q9H987"/>
<dbReference type="BioGRID-ORCS" id="79933">
    <property type="hits" value="61 hits in 1145 CRISPR screens"/>
</dbReference>
<dbReference type="ChiTaRS" id="SYNPO2L">
    <property type="organism name" value="human"/>
</dbReference>
<dbReference type="GenomeRNAi" id="79933"/>
<dbReference type="Pharos" id="Q9H987">
    <property type="development level" value="Tbio"/>
</dbReference>
<dbReference type="PRO" id="PR:Q9H987"/>
<dbReference type="Proteomes" id="UP000005640">
    <property type="component" value="Chromosome 10"/>
</dbReference>
<dbReference type="RNAct" id="Q9H987">
    <property type="molecule type" value="protein"/>
</dbReference>
<dbReference type="Bgee" id="ENSG00000166317">
    <property type="expression patterns" value="Expressed in skeletal muscle tissue of rectus abdominis and 128 other cell types or tissues"/>
</dbReference>
<dbReference type="ExpressionAtlas" id="Q9H987">
    <property type="expression patterns" value="baseline and differential"/>
</dbReference>
<dbReference type="GO" id="GO:0015629">
    <property type="term" value="C:actin cytoskeleton"/>
    <property type="evidence" value="ECO:0000318"/>
    <property type="project" value="GO_Central"/>
</dbReference>
<dbReference type="GO" id="GO:0005634">
    <property type="term" value="C:nucleus"/>
    <property type="evidence" value="ECO:0000318"/>
    <property type="project" value="GO_Central"/>
</dbReference>
<dbReference type="GO" id="GO:0030018">
    <property type="term" value="C:Z disc"/>
    <property type="evidence" value="ECO:0000250"/>
    <property type="project" value="BHF-UCL"/>
</dbReference>
<dbReference type="GO" id="GO:0003779">
    <property type="term" value="F:actin binding"/>
    <property type="evidence" value="ECO:0000318"/>
    <property type="project" value="GO_Central"/>
</dbReference>
<dbReference type="GO" id="GO:0003007">
    <property type="term" value="P:heart morphogenesis"/>
    <property type="evidence" value="ECO:0000250"/>
    <property type="project" value="BHF-UCL"/>
</dbReference>
<dbReference type="GO" id="GO:0032233">
    <property type="term" value="P:positive regulation of actin filament bundle assembly"/>
    <property type="evidence" value="ECO:0000318"/>
    <property type="project" value="GO_Central"/>
</dbReference>
<dbReference type="GO" id="GO:0035025">
    <property type="term" value="P:positive regulation of Rho protein signal transduction"/>
    <property type="evidence" value="ECO:0000250"/>
    <property type="project" value="BHF-UCL"/>
</dbReference>
<dbReference type="GO" id="GO:0051496">
    <property type="term" value="P:positive regulation of stress fiber assembly"/>
    <property type="evidence" value="ECO:0000250"/>
    <property type="project" value="BHF-UCL"/>
</dbReference>
<dbReference type="GO" id="GO:0045214">
    <property type="term" value="P:sarcomere organization"/>
    <property type="evidence" value="ECO:0000250"/>
    <property type="project" value="BHF-UCL"/>
</dbReference>
<dbReference type="CDD" id="cd10820">
    <property type="entry name" value="PDZ_SYNPO2-like"/>
    <property type="match status" value="1"/>
</dbReference>
<dbReference type="FunFam" id="2.30.42.10:FF:000137">
    <property type="entry name" value="Synaptopodin 2-like a"/>
    <property type="match status" value="1"/>
</dbReference>
<dbReference type="Gene3D" id="2.30.42.10">
    <property type="match status" value="1"/>
</dbReference>
<dbReference type="InterPro" id="IPR001478">
    <property type="entry name" value="PDZ"/>
</dbReference>
<dbReference type="InterPro" id="IPR036034">
    <property type="entry name" value="PDZ_sf"/>
</dbReference>
<dbReference type="InterPro" id="IPR051976">
    <property type="entry name" value="Synaptopodin_domain"/>
</dbReference>
<dbReference type="PANTHER" id="PTHR24217">
    <property type="entry name" value="PUTATIVE-RELATED"/>
    <property type="match status" value="1"/>
</dbReference>
<dbReference type="PANTHER" id="PTHR24217:SF10">
    <property type="entry name" value="SYNAPTOPODIN 2-LIKE PROTEIN"/>
    <property type="match status" value="1"/>
</dbReference>
<dbReference type="Pfam" id="PF00595">
    <property type="entry name" value="PDZ"/>
    <property type="match status" value="1"/>
</dbReference>
<dbReference type="SMART" id="SM00228">
    <property type="entry name" value="PDZ"/>
    <property type="match status" value="1"/>
</dbReference>
<dbReference type="SUPFAM" id="SSF50156">
    <property type="entry name" value="PDZ domain-like"/>
    <property type="match status" value="1"/>
</dbReference>
<dbReference type="PROSITE" id="PS50106">
    <property type="entry name" value="PDZ"/>
    <property type="match status" value="1"/>
</dbReference>
<accession>Q9H987</accession>
<accession>A5PKV9</accession>
<accession>Q68A20</accession>
<proteinExistence type="evidence at protein level"/>